<accession>A4JFY7</accession>
<reference key="1">
    <citation type="submission" date="2007-03" db="EMBL/GenBank/DDBJ databases">
        <title>Complete sequence of chromosome 1 of Burkholderia vietnamiensis G4.</title>
        <authorList>
            <consortium name="US DOE Joint Genome Institute"/>
            <person name="Copeland A."/>
            <person name="Lucas S."/>
            <person name="Lapidus A."/>
            <person name="Barry K."/>
            <person name="Detter J.C."/>
            <person name="Glavina del Rio T."/>
            <person name="Hammon N."/>
            <person name="Israni S."/>
            <person name="Dalin E."/>
            <person name="Tice H."/>
            <person name="Pitluck S."/>
            <person name="Chain P."/>
            <person name="Malfatti S."/>
            <person name="Shin M."/>
            <person name="Vergez L."/>
            <person name="Schmutz J."/>
            <person name="Larimer F."/>
            <person name="Land M."/>
            <person name="Hauser L."/>
            <person name="Kyrpides N."/>
            <person name="Tiedje J."/>
            <person name="Richardson P."/>
        </authorList>
    </citation>
    <scope>NUCLEOTIDE SEQUENCE [LARGE SCALE GENOMIC DNA]</scope>
    <source>
        <strain>G4 / LMG 22486</strain>
    </source>
</reference>
<comment type="function">
    <text evidence="1">Catalyzes the ATP-dependent amination of UTP to CTP with either L-glutamine or ammonia as the source of nitrogen. Regulates intracellular CTP levels through interactions with the four ribonucleotide triphosphates.</text>
</comment>
<comment type="catalytic activity">
    <reaction evidence="1">
        <text>UTP + L-glutamine + ATP + H2O = CTP + L-glutamate + ADP + phosphate + 2 H(+)</text>
        <dbReference type="Rhea" id="RHEA:26426"/>
        <dbReference type="ChEBI" id="CHEBI:15377"/>
        <dbReference type="ChEBI" id="CHEBI:15378"/>
        <dbReference type="ChEBI" id="CHEBI:29985"/>
        <dbReference type="ChEBI" id="CHEBI:30616"/>
        <dbReference type="ChEBI" id="CHEBI:37563"/>
        <dbReference type="ChEBI" id="CHEBI:43474"/>
        <dbReference type="ChEBI" id="CHEBI:46398"/>
        <dbReference type="ChEBI" id="CHEBI:58359"/>
        <dbReference type="ChEBI" id="CHEBI:456216"/>
        <dbReference type="EC" id="6.3.4.2"/>
    </reaction>
</comment>
<comment type="catalytic activity">
    <reaction evidence="1">
        <text>L-glutamine + H2O = L-glutamate + NH4(+)</text>
        <dbReference type="Rhea" id="RHEA:15889"/>
        <dbReference type="ChEBI" id="CHEBI:15377"/>
        <dbReference type="ChEBI" id="CHEBI:28938"/>
        <dbReference type="ChEBI" id="CHEBI:29985"/>
        <dbReference type="ChEBI" id="CHEBI:58359"/>
    </reaction>
</comment>
<comment type="catalytic activity">
    <reaction evidence="1">
        <text>UTP + NH4(+) + ATP = CTP + ADP + phosphate + 2 H(+)</text>
        <dbReference type="Rhea" id="RHEA:16597"/>
        <dbReference type="ChEBI" id="CHEBI:15378"/>
        <dbReference type="ChEBI" id="CHEBI:28938"/>
        <dbReference type="ChEBI" id="CHEBI:30616"/>
        <dbReference type="ChEBI" id="CHEBI:37563"/>
        <dbReference type="ChEBI" id="CHEBI:43474"/>
        <dbReference type="ChEBI" id="CHEBI:46398"/>
        <dbReference type="ChEBI" id="CHEBI:456216"/>
    </reaction>
</comment>
<comment type="activity regulation">
    <text evidence="1">Allosterically activated by GTP, when glutamine is the substrate; GTP has no effect on the reaction when ammonia is the substrate. The allosteric effector GTP functions by stabilizing the protein conformation that binds the tetrahedral intermediate(s) formed during glutamine hydrolysis. Inhibited by the product CTP, via allosteric rather than competitive inhibition.</text>
</comment>
<comment type="pathway">
    <text evidence="1">Pyrimidine metabolism; CTP biosynthesis via de novo pathway; CTP from UDP: step 2/2.</text>
</comment>
<comment type="subunit">
    <text evidence="1">Homotetramer.</text>
</comment>
<comment type="miscellaneous">
    <text evidence="1">CTPSs have evolved a hybrid strategy for distinguishing between UTP and CTP. The overlapping regions of the product feedback inhibitory and substrate sites recognize a common feature in both compounds, the triphosphate moiety. To differentiate isosteric substrate and product pyrimidine rings, an additional pocket far from the expected kinase/ligase catalytic site, specifically recognizes the cytosine and ribose portions of the product inhibitor.</text>
</comment>
<comment type="similarity">
    <text evidence="1">Belongs to the CTP synthase family.</text>
</comment>
<evidence type="ECO:0000255" key="1">
    <source>
        <dbReference type="HAMAP-Rule" id="MF_01227"/>
    </source>
</evidence>
<organism>
    <name type="scientific">Burkholderia vietnamiensis (strain G4 / LMG 22486)</name>
    <name type="common">Burkholderia cepacia (strain R1808)</name>
    <dbReference type="NCBI Taxonomy" id="269482"/>
    <lineage>
        <taxon>Bacteria</taxon>
        <taxon>Pseudomonadati</taxon>
        <taxon>Pseudomonadota</taxon>
        <taxon>Betaproteobacteria</taxon>
        <taxon>Burkholderiales</taxon>
        <taxon>Burkholderiaceae</taxon>
        <taxon>Burkholderia</taxon>
        <taxon>Burkholderia cepacia complex</taxon>
    </lineage>
</organism>
<dbReference type="EC" id="6.3.4.2" evidence="1"/>
<dbReference type="EMBL" id="CP000614">
    <property type="protein sequence ID" value="ABO55190.1"/>
    <property type="molecule type" value="Genomic_DNA"/>
</dbReference>
<dbReference type="SMR" id="A4JFY7"/>
<dbReference type="MEROPS" id="C26.964"/>
<dbReference type="KEGG" id="bvi:Bcep1808_2188"/>
<dbReference type="eggNOG" id="COG0504">
    <property type="taxonomic scope" value="Bacteria"/>
</dbReference>
<dbReference type="HOGENOM" id="CLU_011675_5_0_4"/>
<dbReference type="UniPathway" id="UPA00159">
    <property type="reaction ID" value="UER00277"/>
</dbReference>
<dbReference type="Proteomes" id="UP000002287">
    <property type="component" value="Chromosome 1"/>
</dbReference>
<dbReference type="GO" id="GO:0005829">
    <property type="term" value="C:cytosol"/>
    <property type="evidence" value="ECO:0007669"/>
    <property type="project" value="TreeGrafter"/>
</dbReference>
<dbReference type="GO" id="GO:0005524">
    <property type="term" value="F:ATP binding"/>
    <property type="evidence" value="ECO:0007669"/>
    <property type="project" value="UniProtKB-KW"/>
</dbReference>
<dbReference type="GO" id="GO:0003883">
    <property type="term" value="F:CTP synthase activity"/>
    <property type="evidence" value="ECO:0007669"/>
    <property type="project" value="UniProtKB-UniRule"/>
</dbReference>
<dbReference type="GO" id="GO:0004359">
    <property type="term" value="F:glutaminase activity"/>
    <property type="evidence" value="ECO:0007669"/>
    <property type="project" value="RHEA"/>
</dbReference>
<dbReference type="GO" id="GO:0042802">
    <property type="term" value="F:identical protein binding"/>
    <property type="evidence" value="ECO:0007669"/>
    <property type="project" value="TreeGrafter"/>
</dbReference>
<dbReference type="GO" id="GO:0046872">
    <property type="term" value="F:metal ion binding"/>
    <property type="evidence" value="ECO:0007669"/>
    <property type="project" value="UniProtKB-KW"/>
</dbReference>
<dbReference type="GO" id="GO:0044210">
    <property type="term" value="P:'de novo' CTP biosynthetic process"/>
    <property type="evidence" value="ECO:0007669"/>
    <property type="project" value="UniProtKB-UniRule"/>
</dbReference>
<dbReference type="GO" id="GO:0019856">
    <property type="term" value="P:pyrimidine nucleobase biosynthetic process"/>
    <property type="evidence" value="ECO:0007669"/>
    <property type="project" value="TreeGrafter"/>
</dbReference>
<dbReference type="CDD" id="cd03113">
    <property type="entry name" value="CTPS_N"/>
    <property type="match status" value="1"/>
</dbReference>
<dbReference type="CDD" id="cd01746">
    <property type="entry name" value="GATase1_CTP_Synthase"/>
    <property type="match status" value="1"/>
</dbReference>
<dbReference type="FunFam" id="3.40.50.300:FF:000009">
    <property type="entry name" value="CTP synthase"/>
    <property type="match status" value="1"/>
</dbReference>
<dbReference type="FunFam" id="3.40.50.880:FF:000002">
    <property type="entry name" value="CTP synthase"/>
    <property type="match status" value="1"/>
</dbReference>
<dbReference type="Gene3D" id="3.40.50.880">
    <property type="match status" value="1"/>
</dbReference>
<dbReference type="Gene3D" id="3.40.50.300">
    <property type="entry name" value="P-loop containing nucleotide triphosphate hydrolases"/>
    <property type="match status" value="1"/>
</dbReference>
<dbReference type="HAMAP" id="MF_01227">
    <property type="entry name" value="PyrG"/>
    <property type="match status" value="1"/>
</dbReference>
<dbReference type="InterPro" id="IPR029062">
    <property type="entry name" value="Class_I_gatase-like"/>
</dbReference>
<dbReference type="InterPro" id="IPR004468">
    <property type="entry name" value="CTP_synthase"/>
</dbReference>
<dbReference type="InterPro" id="IPR017456">
    <property type="entry name" value="CTP_synthase_N"/>
</dbReference>
<dbReference type="InterPro" id="IPR017926">
    <property type="entry name" value="GATASE"/>
</dbReference>
<dbReference type="InterPro" id="IPR033828">
    <property type="entry name" value="GATase1_CTP_Synthase"/>
</dbReference>
<dbReference type="InterPro" id="IPR027417">
    <property type="entry name" value="P-loop_NTPase"/>
</dbReference>
<dbReference type="NCBIfam" id="NF003792">
    <property type="entry name" value="PRK05380.1"/>
    <property type="match status" value="1"/>
</dbReference>
<dbReference type="NCBIfam" id="TIGR00337">
    <property type="entry name" value="PyrG"/>
    <property type="match status" value="1"/>
</dbReference>
<dbReference type="PANTHER" id="PTHR11550">
    <property type="entry name" value="CTP SYNTHASE"/>
    <property type="match status" value="1"/>
</dbReference>
<dbReference type="PANTHER" id="PTHR11550:SF0">
    <property type="entry name" value="CTP SYNTHASE-RELATED"/>
    <property type="match status" value="1"/>
</dbReference>
<dbReference type="Pfam" id="PF06418">
    <property type="entry name" value="CTP_synth_N"/>
    <property type="match status" value="1"/>
</dbReference>
<dbReference type="Pfam" id="PF00117">
    <property type="entry name" value="GATase"/>
    <property type="match status" value="1"/>
</dbReference>
<dbReference type="SUPFAM" id="SSF52317">
    <property type="entry name" value="Class I glutamine amidotransferase-like"/>
    <property type="match status" value="1"/>
</dbReference>
<dbReference type="SUPFAM" id="SSF52540">
    <property type="entry name" value="P-loop containing nucleoside triphosphate hydrolases"/>
    <property type="match status" value="1"/>
</dbReference>
<dbReference type="PROSITE" id="PS51273">
    <property type="entry name" value="GATASE_TYPE_1"/>
    <property type="match status" value="1"/>
</dbReference>
<gene>
    <name evidence="1" type="primary">pyrG</name>
    <name type="ordered locus">Bcep1808_2188</name>
</gene>
<protein>
    <recommendedName>
        <fullName evidence="1">CTP synthase</fullName>
        <ecNumber evidence="1">6.3.4.2</ecNumber>
    </recommendedName>
    <alternativeName>
        <fullName evidence="1">Cytidine 5'-triphosphate synthase</fullName>
    </alternativeName>
    <alternativeName>
        <fullName evidence="1">Cytidine triphosphate synthetase</fullName>
        <shortName evidence="1">CTP synthetase</shortName>
        <shortName evidence="1">CTPS</shortName>
    </alternativeName>
    <alternativeName>
        <fullName evidence="1">UTP--ammonia ligase</fullName>
    </alternativeName>
</protein>
<feature type="chain" id="PRO_1000139407" description="CTP synthase">
    <location>
        <begin position="1"/>
        <end position="552"/>
    </location>
</feature>
<feature type="domain" description="Glutamine amidotransferase type-1" evidence="1">
    <location>
        <begin position="295"/>
        <end position="547"/>
    </location>
</feature>
<feature type="region of interest" description="Amidoligase domain" evidence="1">
    <location>
        <begin position="1"/>
        <end position="270"/>
    </location>
</feature>
<feature type="active site" description="Nucleophile; for glutamine hydrolysis" evidence="1">
    <location>
        <position position="383"/>
    </location>
</feature>
<feature type="active site" evidence="1">
    <location>
        <position position="520"/>
    </location>
</feature>
<feature type="active site" evidence="1">
    <location>
        <position position="522"/>
    </location>
</feature>
<feature type="binding site" evidence="1">
    <location>
        <position position="13"/>
    </location>
    <ligand>
        <name>CTP</name>
        <dbReference type="ChEBI" id="CHEBI:37563"/>
        <note>allosteric inhibitor</note>
    </ligand>
</feature>
<feature type="binding site" evidence="1">
    <location>
        <position position="13"/>
    </location>
    <ligand>
        <name>UTP</name>
        <dbReference type="ChEBI" id="CHEBI:46398"/>
    </ligand>
</feature>
<feature type="binding site" evidence="1">
    <location>
        <begin position="14"/>
        <end position="19"/>
    </location>
    <ligand>
        <name>ATP</name>
        <dbReference type="ChEBI" id="CHEBI:30616"/>
    </ligand>
</feature>
<feature type="binding site" evidence="1">
    <location>
        <position position="71"/>
    </location>
    <ligand>
        <name>ATP</name>
        <dbReference type="ChEBI" id="CHEBI:30616"/>
    </ligand>
</feature>
<feature type="binding site" evidence="1">
    <location>
        <position position="71"/>
    </location>
    <ligand>
        <name>Mg(2+)</name>
        <dbReference type="ChEBI" id="CHEBI:18420"/>
    </ligand>
</feature>
<feature type="binding site" evidence="1">
    <location>
        <position position="144"/>
    </location>
    <ligand>
        <name>Mg(2+)</name>
        <dbReference type="ChEBI" id="CHEBI:18420"/>
    </ligand>
</feature>
<feature type="binding site" evidence="1">
    <location>
        <begin position="151"/>
        <end position="153"/>
    </location>
    <ligand>
        <name>CTP</name>
        <dbReference type="ChEBI" id="CHEBI:37563"/>
        <note>allosteric inhibitor</note>
    </ligand>
</feature>
<feature type="binding site" evidence="1">
    <location>
        <begin position="191"/>
        <end position="196"/>
    </location>
    <ligand>
        <name>CTP</name>
        <dbReference type="ChEBI" id="CHEBI:37563"/>
        <note>allosteric inhibitor</note>
    </ligand>
</feature>
<feature type="binding site" evidence="1">
    <location>
        <begin position="191"/>
        <end position="196"/>
    </location>
    <ligand>
        <name>UTP</name>
        <dbReference type="ChEBI" id="CHEBI:46398"/>
    </ligand>
</feature>
<feature type="binding site" evidence="1">
    <location>
        <position position="227"/>
    </location>
    <ligand>
        <name>CTP</name>
        <dbReference type="ChEBI" id="CHEBI:37563"/>
        <note>allosteric inhibitor</note>
    </ligand>
</feature>
<feature type="binding site" evidence="1">
    <location>
        <position position="227"/>
    </location>
    <ligand>
        <name>UTP</name>
        <dbReference type="ChEBI" id="CHEBI:46398"/>
    </ligand>
</feature>
<feature type="binding site" evidence="1">
    <location>
        <position position="356"/>
    </location>
    <ligand>
        <name>L-glutamine</name>
        <dbReference type="ChEBI" id="CHEBI:58359"/>
    </ligand>
</feature>
<feature type="binding site" evidence="1">
    <location>
        <begin position="384"/>
        <end position="387"/>
    </location>
    <ligand>
        <name>L-glutamine</name>
        <dbReference type="ChEBI" id="CHEBI:58359"/>
    </ligand>
</feature>
<feature type="binding site" evidence="1">
    <location>
        <position position="407"/>
    </location>
    <ligand>
        <name>L-glutamine</name>
        <dbReference type="ChEBI" id="CHEBI:58359"/>
    </ligand>
</feature>
<feature type="binding site" evidence="1">
    <location>
        <position position="473"/>
    </location>
    <ligand>
        <name>L-glutamine</name>
        <dbReference type="ChEBI" id="CHEBI:58359"/>
    </ligand>
</feature>
<sequence length="552" mass="61212">MTKYVFVTGGVVSSLGKGIAAASLAAILESRGLKVTLLKLDPYINVDPGTMSPFQHGEVFVTEDGAETDLDLGHYERFISTKMRKANNFTTGQIYESVIRKERRGDYLGKTVQVIPHITNEIQAFIERGAASATCGEPDVAIVEIGGTVGDIESLPFLEAARQMSLRLGRNSACFVHLTLVPYVATAGELKTKPTQHSVQKLREIGILPHVLLCRADRRIPDDESKKISMFSNVPEDAVISVWDADSIYKIPQMLHDQGLDRIICDELKLSPKEADLSMWSELVEKLEHPKHEVTIGMVGKYVDLTESYKSLIEALRHASLHTSTKVNIEYIDSEEIESNGVDSLKHLDAVLVPGGFGRRGTEGKIAAIRYAREAKVPYLGICLGMQLAVIEFARDVVGLKQANSTEFDPDTPERVVALITEWYDREGKVETRTESSDLGGTMRLGSQRCPIKPGTMAEEIYGKDVNERHRHRYEVNNRFVPQLEAGGLIISARTPSEDLPEMMELPRSMHPWFVGVQFHPEFTSTPRDGHPLFKSFVEAALANKQARGAEA</sequence>
<keyword id="KW-0067">ATP-binding</keyword>
<keyword id="KW-0315">Glutamine amidotransferase</keyword>
<keyword id="KW-0436">Ligase</keyword>
<keyword id="KW-0460">Magnesium</keyword>
<keyword id="KW-0479">Metal-binding</keyword>
<keyword id="KW-0547">Nucleotide-binding</keyword>
<keyword id="KW-0665">Pyrimidine biosynthesis</keyword>
<name>PYRG_BURVG</name>
<proteinExistence type="inferred from homology"/>